<keyword id="KW-0068">Autocatalytic cleavage</keyword>
<keyword id="KW-0963">Cytoplasm</keyword>
<keyword id="KW-0210">Decarboxylase</keyword>
<keyword id="KW-0456">Lyase</keyword>
<keyword id="KW-0566">Pantothenate biosynthesis</keyword>
<keyword id="KW-0670">Pyruvate</keyword>
<keyword id="KW-1185">Reference proteome</keyword>
<keyword id="KW-0704">Schiff base</keyword>
<keyword id="KW-0865">Zymogen</keyword>
<dbReference type="EC" id="4.1.1.11" evidence="1"/>
<dbReference type="EMBL" id="CP000673">
    <property type="protein sequence ID" value="EDK33665.1"/>
    <property type="molecule type" value="Genomic_DNA"/>
</dbReference>
<dbReference type="RefSeq" id="WP_012102018.1">
    <property type="nucleotide sequence ID" value="NC_009706.1"/>
</dbReference>
<dbReference type="SMR" id="A5N8N4"/>
<dbReference type="STRING" id="431943.CKL_1623"/>
<dbReference type="KEGG" id="ckl:CKL_1623"/>
<dbReference type="eggNOG" id="COG0853">
    <property type="taxonomic scope" value="Bacteria"/>
</dbReference>
<dbReference type="HOGENOM" id="CLU_115305_2_0_9"/>
<dbReference type="UniPathway" id="UPA00028">
    <property type="reaction ID" value="UER00002"/>
</dbReference>
<dbReference type="Proteomes" id="UP000002411">
    <property type="component" value="Chromosome"/>
</dbReference>
<dbReference type="GO" id="GO:0005829">
    <property type="term" value="C:cytosol"/>
    <property type="evidence" value="ECO:0007669"/>
    <property type="project" value="TreeGrafter"/>
</dbReference>
<dbReference type="GO" id="GO:0004068">
    <property type="term" value="F:aspartate 1-decarboxylase activity"/>
    <property type="evidence" value="ECO:0007669"/>
    <property type="project" value="UniProtKB-UniRule"/>
</dbReference>
<dbReference type="GO" id="GO:0006523">
    <property type="term" value="P:alanine biosynthetic process"/>
    <property type="evidence" value="ECO:0007669"/>
    <property type="project" value="InterPro"/>
</dbReference>
<dbReference type="GO" id="GO:0015940">
    <property type="term" value="P:pantothenate biosynthetic process"/>
    <property type="evidence" value="ECO:0007669"/>
    <property type="project" value="UniProtKB-UniRule"/>
</dbReference>
<dbReference type="CDD" id="cd06919">
    <property type="entry name" value="Asp_decarbox"/>
    <property type="match status" value="1"/>
</dbReference>
<dbReference type="Gene3D" id="2.40.40.20">
    <property type="match status" value="1"/>
</dbReference>
<dbReference type="HAMAP" id="MF_00446">
    <property type="entry name" value="PanD"/>
    <property type="match status" value="1"/>
</dbReference>
<dbReference type="InterPro" id="IPR009010">
    <property type="entry name" value="Asp_de-COase-like_dom_sf"/>
</dbReference>
<dbReference type="InterPro" id="IPR003190">
    <property type="entry name" value="Asp_decarbox"/>
</dbReference>
<dbReference type="NCBIfam" id="TIGR00223">
    <property type="entry name" value="panD"/>
    <property type="match status" value="1"/>
</dbReference>
<dbReference type="PANTHER" id="PTHR21012">
    <property type="entry name" value="ASPARTATE 1-DECARBOXYLASE"/>
    <property type="match status" value="1"/>
</dbReference>
<dbReference type="PANTHER" id="PTHR21012:SF0">
    <property type="entry name" value="ASPARTATE 1-DECARBOXYLASE"/>
    <property type="match status" value="1"/>
</dbReference>
<dbReference type="Pfam" id="PF02261">
    <property type="entry name" value="Asp_decarbox"/>
    <property type="match status" value="1"/>
</dbReference>
<dbReference type="PIRSF" id="PIRSF006246">
    <property type="entry name" value="Asp_decarbox"/>
    <property type="match status" value="1"/>
</dbReference>
<dbReference type="SUPFAM" id="SSF50692">
    <property type="entry name" value="ADC-like"/>
    <property type="match status" value="1"/>
</dbReference>
<proteinExistence type="inferred from homology"/>
<reference key="1">
    <citation type="journal article" date="2008" name="Proc. Natl. Acad. Sci. U.S.A.">
        <title>The genome of Clostridium kluyveri, a strict anaerobe with unique metabolic features.</title>
        <authorList>
            <person name="Seedorf H."/>
            <person name="Fricke W.F."/>
            <person name="Veith B."/>
            <person name="Brueggemann H."/>
            <person name="Liesegang H."/>
            <person name="Strittmatter A."/>
            <person name="Miethke M."/>
            <person name="Buckel W."/>
            <person name="Hinderberger J."/>
            <person name="Li F."/>
            <person name="Hagemeier C."/>
            <person name="Thauer R.K."/>
            <person name="Gottschalk G."/>
        </authorList>
    </citation>
    <scope>NUCLEOTIDE SEQUENCE [LARGE SCALE GENOMIC DNA]</scope>
    <source>
        <strain>ATCC 8527 / DSM 555 / NBRC 12016 / NCIMB 10680 / K1</strain>
    </source>
</reference>
<comment type="function">
    <text evidence="1">Catalyzes the pyruvoyl-dependent decarboxylation of aspartate to produce beta-alanine.</text>
</comment>
<comment type="catalytic activity">
    <reaction evidence="1">
        <text>L-aspartate + H(+) = beta-alanine + CO2</text>
        <dbReference type="Rhea" id="RHEA:19497"/>
        <dbReference type="ChEBI" id="CHEBI:15378"/>
        <dbReference type="ChEBI" id="CHEBI:16526"/>
        <dbReference type="ChEBI" id="CHEBI:29991"/>
        <dbReference type="ChEBI" id="CHEBI:57966"/>
        <dbReference type="EC" id="4.1.1.11"/>
    </reaction>
</comment>
<comment type="cofactor">
    <cofactor evidence="1">
        <name>pyruvate</name>
        <dbReference type="ChEBI" id="CHEBI:15361"/>
    </cofactor>
    <text evidence="1">Binds 1 pyruvoyl group covalently per subunit.</text>
</comment>
<comment type="pathway">
    <text evidence="1">Cofactor biosynthesis; (R)-pantothenate biosynthesis; beta-alanine from L-aspartate: step 1/1.</text>
</comment>
<comment type="subunit">
    <text evidence="1">Heterooctamer of four alpha and four beta subunits.</text>
</comment>
<comment type="subcellular location">
    <subcellularLocation>
        <location evidence="1">Cytoplasm</location>
    </subcellularLocation>
</comment>
<comment type="PTM">
    <text evidence="1">Is synthesized initially as an inactive proenzyme, which is activated by self-cleavage at a specific serine bond to produce a beta-subunit with a hydroxyl group at its C-terminus and an alpha-subunit with a pyruvoyl group at its N-terminus.</text>
</comment>
<comment type="similarity">
    <text evidence="1">Belongs to the PanD family.</text>
</comment>
<feature type="chain" id="PRO_1000080916" description="Aspartate 1-decarboxylase beta chain" evidence="1">
    <location>
        <begin position="1"/>
        <end position="24"/>
    </location>
</feature>
<feature type="chain" id="PRO_1000080917" description="Aspartate 1-decarboxylase alpha chain" evidence="1">
    <location>
        <begin position="25"/>
        <end position="127"/>
    </location>
</feature>
<feature type="active site" description="Schiff-base intermediate with substrate; via pyruvic acid" evidence="1">
    <location>
        <position position="25"/>
    </location>
</feature>
<feature type="active site" description="Proton donor" evidence="1">
    <location>
        <position position="58"/>
    </location>
</feature>
<feature type="binding site" evidence="1">
    <location>
        <position position="57"/>
    </location>
    <ligand>
        <name>substrate</name>
    </ligand>
</feature>
<feature type="binding site" evidence="1">
    <location>
        <begin position="73"/>
        <end position="75"/>
    </location>
    <ligand>
        <name>substrate</name>
    </ligand>
</feature>
<feature type="modified residue" description="Pyruvic acid (Ser)" evidence="1">
    <location>
        <position position="25"/>
    </location>
</feature>
<sequence>MQLNMLKSKIHRATVTEANLNYVGSITIDRELMESAHIIEYEKIQVVDIDNGNRLETYVIAGEKGSKVICLNGAAARHVQPGDKVILMTYCQMDEEEAKIHKPIVIFLDENNSIFQITDYEKHGQVK</sequence>
<name>PAND_CLOK5</name>
<accession>A5N8N4</accession>
<protein>
    <recommendedName>
        <fullName evidence="1">Aspartate 1-decarboxylase</fullName>
        <ecNumber evidence="1">4.1.1.11</ecNumber>
    </recommendedName>
    <alternativeName>
        <fullName evidence="1">Aspartate alpha-decarboxylase</fullName>
    </alternativeName>
    <component>
        <recommendedName>
            <fullName evidence="1">Aspartate 1-decarboxylase beta chain</fullName>
        </recommendedName>
    </component>
    <component>
        <recommendedName>
            <fullName evidence="1">Aspartate 1-decarboxylase alpha chain</fullName>
        </recommendedName>
    </component>
</protein>
<organism>
    <name type="scientific">Clostridium kluyveri (strain ATCC 8527 / DSM 555 / NBRC 12016 / NCIMB 10680 / K1)</name>
    <dbReference type="NCBI Taxonomy" id="431943"/>
    <lineage>
        <taxon>Bacteria</taxon>
        <taxon>Bacillati</taxon>
        <taxon>Bacillota</taxon>
        <taxon>Clostridia</taxon>
        <taxon>Eubacteriales</taxon>
        <taxon>Clostridiaceae</taxon>
        <taxon>Clostridium</taxon>
    </lineage>
</organism>
<evidence type="ECO:0000255" key="1">
    <source>
        <dbReference type="HAMAP-Rule" id="MF_00446"/>
    </source>
</evidence>
<gene>
    <name evidence="1" type="primary">panD</name>
    <name type="ordered locus">CKL_1623</name>
</gene>